<gene>
    <name type="ordered locus">FPV182</name>
</gene>
<name>A17_FOWPN</name>
<feature type="chain" id="PRO_0000099260" description="Virion membrane protein A17 precursor homolog">
    <location>
        <begin position="1"/>
        <end position="198"/>
    </location>
</feature>
<feature type="topological domain" description="Virion surface" evidence="1">
    <location>
        <begin position="1"/>
        <end position="55"/>
    </location>
</feature>
<feature type="transmembrane region" description="Helical" evidence="2">
    <location>
        <begin position="56"/>
        <end position="76"/>
    </location>
</feature>
<feature type="topological domain" description="Intravirion" evidence="1">
    <location>
        <begin position="77"/>
        <end position="145"/>
    </location>
</feature>
<feature type="transmembrane region" description="Helical" evidence="2">
    <location>
        <begin position="146"/>
        <end position="166"/>
    </location>
</feature>
<feature type="topological domain" description="Virion surface" evidence="1">
    <location>
        <begin position="167"/>
        <end position="198"/>
    </location>
</feature>
<feature type="site" description="Cleavage; by I7 protease" evidence="1">
    <location>
        <begin position="18"/>
        <end position="19"/>
    </location>
</feature>
<feature type="site" description="Cleavage; by I7 protease" evidence="1">
    <location>
        <begin position="182"/>
        <end position="183"/>
    </location>
</feature>
<feature type="modified residue" description="Phosphotyrosine" evidence="1">
    <location>
        <position position="198"/>
    </location>
</feature>
<feature type="disulfide bond" description="Interchain" evidence="1">
    <location>
        <position position="177"/>
    </location>
</feature>
<evidence type="ECO:0000250" key="1"/>
<evidence type="ECO:0000255" key="2"/>
<evidence type="ECO:0000305" key="3"/>
<protein>
    <recommendedName>
        <fullName>Virion membrane protein A17 precursor homolog</fullName>
    </recommendedName>
</protein>
<sequence>MDNNYLNYYNVFEEFDAGAGIKEKELFTEEQQLSFLPKKGLGNGGFDGVERLYSNIINNNDIKSLLALIMLVFAINTNSLVALIFIILSAIFVPVPALIIAYCIALHLKNGSDATHVGISILLMLASAVTIYLTSTSKISKGFKRAIDVVLLVILGFYIVKIYGIDRQISIPSRRYCRQMSGPSSLENLNAFQTHSNY</sequence>
<reference key="1">
    <citation type="journal article" date="2000" name="J. Virol.">
        <title>The genome of fowlpox virus.</title>
        <authorList>
            <person name="Afonso C.L."/>
            <person name="Tulman E.R."/>
            <person name="Lu Z."/>
            <person name="Zsak L."/>
            <person name="Kutish G.F."/>
            <person name="Rock D.L."/>
        </authorList>
    </citation>
    <scope>NUCLEOTIDE SEQUENCE [LARGE SCALE GENOMIC DNA]</scope>
</reference>
<proteinExistence type="inferred from homology"/>
<accession>Q9J551</accession>
<organism>
    <name type="scientific">Fowlpox virus (strain NVSL)</name>
    <name type="common">FPV</name>
    <dbReference type="NCBI Taxonomy" id="928301"/>
    <lineage>
        <taxon>Viruses</taxon>
        <taxon>Varidnaviria</taxon>
        <taxon>Bamfordvirae</taxon>
        <taxon>Nucleocytoviricota</taxon>
        <taxon>Pokkesviricetes</taxon>
        <taxon>Chitovirales</taxon>
        <taxon>Poxviridae</taxon>
        <taxon>Chordopoxvirinae</taxon>
        <taxon>Avipoxvirus</taxon>
        <taxon>Fowlpox virus</taxon>
    </lineage>
</organism>
<organismHost>
    <name type="scientific">Vertebrata</name>
    <dbReference type="NCBI Taxonomy" id="7742"/>
</organismHost>
<dbReference type="EMBL" id="AF198100">
    <property type="protein sequence ID" value="AAF44526.1"/>
    <property type="molecule type" value="Genomic_DNA"/>
</dbReference>
<dbReference type="RefSeq" id="NP_039145.1">
    <property type="nucleotide sequence ID" value="NC_002188.1"/>
</dbReference>
<dbReference type="SMR" id="Q9J551"/>
<dbReference type="GeneID" id="1486754"/>
<dbReference type="KEGG" id="vg:1486754"/>
<dbReference type="Proteomes" id="UP000008597">
    <property type="component" value="Segment"/>
</dbReference>
<dbReference type="GO" id="GO:0016020">
    <property type="term" value="C:membrane"/>
    <property type="evidence" value="ECO:0007669"/>
    <property type="project" value="UniProtKB-KW"/>
</dbReference>
<dbReference type="GO" id="GO:0019031">
    <property type="term" value="C:viral envelope"/>
    <property type="evidence" value="ECO:0007669"/>
    <property type="project" value="UniProtKB-KW"/>
</dbReference>
<dbReference type="GO" id="GO:0055036">
    <property type="term" value="C:virion membrane"/>
    <property type="evidence" value="ECO:0007669"/>
    <property type="project" value="UniProtKB-SubCell"/>
</dbReference>
<dbReference type="InterPro" id="IPR007977">
    <property type="entry name" value="Poxvirus_OPG144"/>
</dbReference>
<dbReference type="Pfam" id="PF05313">
    <property type="entry name" value="Pox_P21"/>
    <property type="match status" value="1"/>
</dbReference>
<keyword id="KW-1015">Disulfide bond</keyword>
<keyword id="KW-0472">Membrane</keyword>
<keyword id="KW-0597">Phosphoprotein</keyword>
<keyword id="KW-1185">Reference proteome</keyword>
<keyword id="KW-0812">Transmembrane</keyword>
<keyword id="KW-1133">Transmembrane helix</keyword>
<keyword id="KW-0261">Viral envelope protein</keyword>
<keyword id="KW-0946">Virion</keyword>
<comment type="function">
    <text evidence="1">Envelope protein which participates in virus morphogenesis. Needed for an early step in viral crescent membrane formation by interacting with D13 scaffold protein. Its interaction with D13 scaffold protein leads to the formation of rigid, crescent-shaped membranes that assemble around the cytoplasmic virus factory. Membrane anchor for the protein A27. A17-A27 virus envelope protein might be involved in fusion or attachment, and can further associate to A26 (By similarity).</text>
</comment>
<comment type="subunit">
    <text evidence="1">Interacts (via N-terminus) with D13 scaffold; this interaction helps D13 to associate with membranes. Interacts with A14. Interacts with A27; this interaction allows A27 to be anchored in the mature virion (MV) membrane. Part of a complex composed of A17, A25, A26 and A27 (By similarity).</text>
</comment>
<comment type="subcellular location">
    <subcellularLocation>
        <location evidence="3">Virion membrane</location>
        <topology evidence="3">Multi-pass membrane protein</topology>
    </subcellularLocation>
</comment>
<comment type="PTM">
    <text evidence="1">The 22 kDa precursor is probably cleaved by the I7 protease during virus maturation.</text>
</comment>
<comment type="PTM">
    <text evidence="1">Phosphorylated on tyrosine and threonine. Its phosphorylation state is regulated by the F10 kinase and the H1 phosphatase (By similarity). Phosphorylation by F10 kinase seems to be required to form the membranes associated with IV (By similarity).</text>
</comment>
<comment type="similarity">
    <text evidence="3">Belongs to the chordopoxvirinae A17 family.</text>
</comment>